<proteinExistence type="inferred from homology"/>
<organism>
    <name type="scientific">Prochlorococcus marinus (strain MIT 9303)</name>
    <dbReference type="NCBI Taxonomy" id="59922"/>
    <lineage>
        <taxon>Bacteria</taxon>
        <taxon>Bacillati</taxon>
        <taxon>Cyanobacteriota</taxon>
        <taxon>Cyanophyceae</taxon>
        <taxon>Synechococcales</taxon>
        <taxon>Prochlorococcaceae</taxon>
        <taxon>Prochlorococcus</taxon>
    </lineage>
</organism>
<comment type="function">
    <text evidence="1">Involved in the de novo purine biosynthesis. Catalyzes the transfer of formate to 5-phospho-ribosyl-glycinamide (GAR), producing 5-phospho-ribosyl-N-formylglycinamide (FGAR). Formate is provided by PurU via hydrolysis of 10-formyl-tetrahydrofolate.</text>
</comment>
<comment type="catalytic activity">
    <reaction evidence="1">
        <text>N(1)-(5-phospho-beta-D-ribosyl)glycinamide + formate + ATP = N(2)-formyl-N(1)-(5-phospho-beta-D-ribosyl)glycinamide + ADP + phosphate + H(+)</text>
        <dbReference type="Rhea" id="RHEA:24829"/>
        <dbReference type="ChEBI" id="CHEBI:15378"/>
        <dbReference type="ChEBI" id="CHEBI:15740"/>
        <dbReference type="ChEBI" id="CHEBI:30616"/>
        <dbReference type="ChEBI" id="CHEBI:43474"/>
        <dbReference type="ChEBI" id="CHEBI:143788"/>
        <dbReference type="ChEBI" id="CHEBI:147286"/>
        <dbReference type="ChEBI" id="CHEBI:456216"/>
        <dbReference type="EC" id="6.3.1.21"/>
    </reaction>
    <physiologicalReaction direction="left-to-right" evidence="1">
        <dbReference type="Rhea" id="RHEA:24830"/>
    </physiologicalReaction>
</comment>
<comment type="pathway">
    <text evidence="1">Purine metabolism; IMP biosynthesis via de novo pathway; N(2)-formyl-N(1)-(5-phospho-D-ribosyl)glycinamide from N(1)-(5-phospho-D-ribosyl)glycinamide (formate route): step 1/1.</text>
</comment>
<comment type="subunit">
    <text evidence="1">Homodimer.</text>
</comment>
<comment type="similarity">
    <text evidence="1">Belongs to the PurK/PurT family.</text>
</comment>
<comment type="sequence caution" evidence="2">
    <conflict type="erroneous initiation">
        <sequence resource="EMBL-CDS" id="ABM79746"/>
    </conflict>
</comment>
<accession>A2CE36</accession>
<name>PURT_PROM3</name>
<gene>
    <name evidence="1" type="primary">purT</name>
    <name type="ordered locus">P9303_30161</name>
</gene>
<keyword id="KW-0067">ATP-binding</keyword>
<keyword id="KW-0436">Ligase</keyword>
<keyword id="KW-0460">Magnesium</keyword>
<keyword id="KW-0479">Metal-binding</keyword>
<keyword id="KW-0547">Nucleotide-binding</keyword>
<keyword id="KW-0658">Purine biosynthesis</keyword>
<evidence type="ECO:0000255" key="1">
    <source>
        <dbReference type="HAMAP-Rule" id="MF_01643"/>
    </source>
</evidence>
<evidence type="ECO:0000305" key="2"/>
<dbReference type="EC" id="6.3.1.21" evidence="1"/>
<dbReference type="EMBL" id="CP000554">
    <property type="protein sequence ID" value="ABM79746.1"/>
    <property type="status" value="ALT_INIT"/>
    <property type="molecule type" value="Genomic_DNA"/>
</dbReference>
<dbReference type="RefSeq" id="WP_041374998.1">
    <property type="nucleotide sequence ID" value="NC_008820.1"/>
</dbReference>
<dbReference type="SMR" id="A2CE36"/>
<dbReference type="STRING" id="59922.P9303_30161"/>
<dbReference type="KEGG" id="pmf:P9303_30161"/>
<dbReference type="HOGENOM" id="CLU_011534_1_3_3"/>
<dbReference type="BioCyc" id="PMAR59922:G1G80-2649-MONOMER"/>
<dbReference type="UniPathway" id="UPA00074">
    <property type="reaction ID" value="UER00127"/>
</dbReference>
<dbReference type="Proteomes" id="UP000002274">
    <property type="component" value="Chromosome"/>
</dbReference>
<dbReference type="GO" id="GO:0005829">
    <property type="term" value="C:cytosol"/>
    <property type="evidence" value="ECO:0007669"/>
    <property type="project" value="TreeGrafter"/>
</dbReference>
<dbReference type="GO" id="GO:0005524">
    <property type="term" value="F:ATP binding"/>
    <property type="evidence" value="ECO:0007669"/>
    <property type="project" value="UniProtKB-UniRule"/>
</dbReference>
<dbReference type="GO" id="GO:0000287">
    <property type="term" value="F:magnesium ion binding"/>
    <property type="evidence" value="ECO:0007669"/>
    <property type="project" value="InterPro"/>
</dbReference>
<dbReference type="GO" id="GO:0043815">
    <property type="term" value="F:phosphoribosylglycinamide formyltransferase 2 activity"/>
    <property type="evidence" value="ECO:0007669"/>
    <property type="project" value="UniProtKB-UniRule"/>
</dbReference>
<dbReference type="GO" id="GO:0004644">
    <property type="term" value="F:phosphoribosylglycinamide formyltransferase activity"/>
    <property type="evidence" value="ECO:0007669"/>
    <property type="project" value="InterPro"/>
</dbReference>
<dbReference type="GO" id="GO:0006189">
    <property type="term" value="P:'de novo' IMP biosynthetic process"/>
    <property type="evidence" value="ECO:0007669"/>
    <property type="project" value="UniProtKB-UniRule"/>
</dbReference>
<dbReference type="Gene3D" id="3.40.50.20">
    <property type="match status" value="1"/>
</dbReference>
<dbReference type="Gene3D" id="3.30.1490.20">
    <property type="entry name" value="ATP-grasp fold, A domain"/>
    <property type="match status" value="1"/>
</dbReference>
<dbReference type="Gene3D" id="3.30.470.20">
    <property type="entry name" value="ATP-grasp fold, B domain"/>
    <property type="match status" value="1"/>
</dbReference>
<dbReference type="HAMAP" id="MF_01643">
    <property type="entry name" value="PurT"/>
    <property type="match status" value="1"/>
</dbReference>
<dbReference type="InterPro" id="IPR011761">
    <property type="entry name" value="ATP-grasp"/>
</dbReference>
<dbReference type="InterPro" id="IPR003135">
    <property type="entry name" value="ATP-grasp_carboxylate-amine"/>
</dbReference>
<dbReference type="InterPro" id="IPR013815">
    <property type="entry name" value="ATP_grasp_subdomain_1"/>
</dbReference>
<dbReference type="InterPro" id="IPR016185">
    <property type="entry name" value="PreATP-grasp_dom_sf"/>
</dbReference>
<dbReference type="InterPro" id="IPR005862">
    <property type="entry name" value="PurT"/>
</dbReference>
<dbReference type="InterPro" id="IPR054350">
    <property type="entry name" value="PurT/PurK_preATP-grasp"/>
</dbReference>
<dbReference type="InterPro" id="IPR048740">
    <property type="entry name" value="PurT_C"/>
</dbReference>
<dbReference type="InterPro" id="IPR011054">
    <property type="entry name" value="Rudment_hybrid_motif"/>
</dbReference>
<dbReference type="NCBIfam" id="NF006766">
    <property type="entry name" value="PRK09288.1"/>
    <property type="match status" value="1"/>
</dbReference>
<dbReference type="NCBIfam" id="TIGR01142">
    <property type="entry name" value="purT"/>
    <property type="match status" value="1"/>
</dbReference>
<dbReference type="PANTHER" id="PTHR43055">
    <property type="entry name" value="FORMATE-DEPENDENT PHOSPHORIBOSYLGLYCINAMIDE FORMYLTRANSFERASE"/>
    <property type="match status" value="1"/>
</dbReference>
<dbReference type="PANTHER" id="PTHR43055:SF1">
    <property type="entry name" value="FORMATE-DEPENDENT PHOSPHORIBOSYLGLYCINAMIDE FORMYLTRANSFERASE"/>
    <property type="match status" value="1"/>
</dbReference>
<dbReference type="Pfam" id="PF02222">
    <property type="entry name" value="ATP-grasp"/>
    <property type="match status" value="1"/>
</dbReference>
<dbReference type="Pfam" id="PF21244">
    <property type="entry name" value="PurT_C"/>
    <property type="match status" value="1"/>
</dbReference>
<dbReference type="Pfam" id="PF22660">
    <property type="entry name" value="RS_preATP-grasp-like"/>
    <property type="match status" value="1"/>
</dbReference>
<dbReference type="SUPFAM" id="SSF56059">
    <property type="entry name" value="Glutathione synthetase ATP-binding domain-like"/>
    <property type="match status" value="1"/>
</dbReference>
<dbReference type="SUPFAM" id="SSF52440">
    <property type="entry name" value="PreATP-grasp domain"/>
    <property type="match status" value="1"/>
</dbReference>
<dbReference type="SUPFAM" id="SSF51246">
    <property type="entry name" value="Rudiment single hybrid motif"/>
    <property type="match status" value="1"/>
</dbReference>
<dbReference type="PROSITE" id="PS50975">
    <property type="entry name" value="ATP_GRASP"/>
    <property type="match status" value="1"/>
</dbReference>
<sequence length="392" mass="42168">MTVLPKTLLLLGSGELGKEITIAAQRLGCHVIACDRYSGAPAMQVADQAEVLDMNNSEALTAIIRHHQPDVVIPEIEALAVNALAELENEGITVIPTARATAVTMNRDRIRDLASEELALLTPKFAYAGSAEELRHAAEPLGWPVVVKPVMSSSGKGQSVVSNPEGLRQAWQAAMAGSRGNSPRVIVEEFLHFDLEITLLTIRQEDGSTLFCEPIGHEQIGGDYQCSWQPAELSTEQLKQAQSMALSITENLGGVGLFGVEFFLCGNEVIFSELSPRPHDTGLVTLISQNLSEFELHLRAVLKLPIPTIQTADAAASRVILAKDNLSSISYKGVEKALSEIDTQILLFGKPNARPRRRMGVALAKGKSLEAVRSKADRAAASIQVIKGKGVT</sequence>
<reference key="1">
    <citation type="journal article" date="2007" name="PLoS Genet.">
        <title>Patterns and implications of gene gain and loss in the evolution of Prochlorococcus.</title>
        <authorList>
            <person name="Kettler G.C."/>
            <person name="Martiny A.C."/>
            <person name="Huang K."/>
            <person name="Zucker J."/>
            <person name="Coleman M.L."/>
            <person name="Rodrigue S."/>
            <person name="Chen F."/>
            <person name="Lapidus A."/>
            <person name="Ferriera S."/>
            <person name="Johnson J."/>
            <person name="Steglich C."/>
            <person name="Church G.M."/>
            <person name="Richardson P."/>
            <person name="Chisholm S.W."/>
        </authorList>
    </citation>
    <scope>NUCLEOTIDE SEQUENCE [LARGE SCALE GENOMIC DNA]</scope>
    <source>
        <strain>MIT 9303</strain>
    </source>
</reference>
<feature type="chain" id="PRO_0000319201" description="Formate-dependent phosphoribosylglycinamide formyltransferase">
    <location>
        <begin position="1"/>
        <end position="392"/>
    </location>
</feature>
<feature type="domain" description="ATP-grasp" evidence="1">
    <location>
        <begin position="112"/>
        <end position="302"/>
    </location>
</feature>
<feature type="binding site" evidence="1">
    <location>
        <begin position="15"/>
        <end position="16"/>
    </location>
    <ligand>
        <name>N(1)-(5-phospho-beta-D-ribosyl)glycinamide</name>
        <dbReference type="ChEBI" id="CHEBI:143788"/>
    </ligand>
</feature>
<feature type="binding site" evidence="1">
    <location>
        <position position="75"/>
    </location>
    <ligand>
        <name>N(1)-(5-phospho-beta-D-ribosyl)glycinamide</name>
        <dbReference type="ChEBI" id="CHEBI:143788"/>
    </ligand>
</feature>
<feature type="binding site" evidence="1">
    <location>
        <position position="107"/>
    </location>
    <ligand>
        <name>ATP</name>
        <dbReference type="ChEBI" id="CHEBI:30616"/>
    </ligand>
</feature>
<feature type="binding site" evidence="1">
    <location>
        <position position="148"/>
    </location>
    <ligand>
        <name>ATP</name>
        <dbReference type="ChEBI" id="CHEBI:30616"/>
    </ligand>
</feature>
<feature type="binding site" evidence="1">
    <location>
        <begin position="153"/>
        <end position="158"/>
    </location>
    <ligand>
        <name>ATP</name>
        <dbReference type="ChEBI" id="CHEBI:30616"/>
    </ligand>
</feature>
<feature type="binding site" evidence="1">
    <location>
        <begin position="188"/>
        <end position="191"/>
    </location>
    <ligand>
        <name>ATP</name>
        <dbReference type="ChEBI" id="CHEBI:30616"/>
    </ligand>
</feature>
<feature type="binding site" evidence="1">
    <location>
        <position position="196"/>
    </location>
    <ligand>
        <name>ATP</name>
        <dbReference type="ChEBI" id="CHEBI:30616"/>
    </ligand>
</feature>
<feature type="binding site" evidence="1">
    <location>
        <position position="261"/>
    </location>
    <ligand>
        <name>Mg(2+)</name>
        <dbReference type="ChEBI" id="CHEBI:18420"/>
    </ligand>
</feature>
<feature type="binding site" evidence="1">
    <location>
        <position position="273"/>
    </location>
    <ligand>
        <name>Mg(2+)</name>
        <dbReference type="ChEBI" id="CHEBI:18420"/>
    </ligand>
</feature>
<feature type="binding site" evidence="1">
    <location>
        <position position="280"/>
    </location>
    <ligand>
        <name>N(1)-(5-phospho-beta-D-ribosyl)glycinamide</name>
        <dbReference type="ChEBI" id="CHEBI:143788"/>
    </ligand>
</feature>
<feature type="binding site" evidence="1">
    <location>
        <position position="350"/>
    </location>
    <ligand>
        <name>N(1)-(5-phospho-beta-D-ribosyl)glycinamide</name>
        <dbReference type="ChEBI" id="CHEBI:143788"/>
    </ligand>
</feature>
<feature type="binding site" evidence="1">
    <location>
        <begin position="357"/>
        <end position="358"/>
    </location>
    <ligand>
        <name>N(1)-(5-phospho-beta-D-ribosyl)glycinamide</name>
        <dbReference type="ChEBI" id="CHEBI:143788"/>
    </ligand>
</feature>
<protein>
    <recommendedName>
        <fullName evidence="1">Formate-dependent phosphoribosylglycinamide formyltransferase</fullName>
        <ecNumber evidence="1">6.3.1.21</ecNumber>
    </recommendedName>
    <alternativeName>
        <fullName evidence="1">5'-phosphoribosylglycinamide transformylase 2</fullName>
    </alternativeName>
    <alternativeName>
        <fullName evidence="1">Formate-dependent GAR transformylase</fullName>
    </alternativeName>
    <alternativeName>
        <fullName evidence="1">GAR transformylase 2</fullName>
        <shortName evidence="1">GART 2</shortName>
    </alternativeName>
    <alternativeName>
        <fullName evidence="1">Non-folate glycinamide ribonucleotide transformylase</fullName>
    </alternativeName>
    <alternativeName>
        <fullName evidence="1">Phosphoribosylglycinamide formyltransferase 2</fullName>
    </alternativeName>
</protein>